<comment type="function">
    <text evidence="1">Phosphorylation of dTMP to form dTDP in both de novo and salvage pathways of dTTP synthesis.</text>
</comment>
<comment type="catalytic activity">
    <reaction evidence="1">
        <text>dTMP + ATP = dTDP + ADP</text>
        <dbReference type="Rhea" id="RHEA:13517"/>
        <dbReference type="ChEBI" id="CHEBI:30616"/>
        <dbReference type="ChEBI" id="CHEBI:58369"/>
        <dbReference type="ChEBI" id="CHEBI:63528"/>
        <dbReference type="ChEBI" id="CHEBI:456216"/>
        <dbReference type="EC" id="2.7.4.9"/>
    </reaction>
</comment>
<comment type="similarity">
    <text evidence="1">Belongs to the thymidylate kinase family.</text>
</comment>
<accession>Q48L36</accession>
<reference key="1">
    <citation type="journal article" date="2005" name="J. Bacteriol.">
        <title>Whole-genome sequence analysis of Pseudomonas syringae pv. phaseolicola 1448A reveals divergence among pathovars in genes involved in virulence and transposition.</title>
        <authorList>
            <person name="Joardar V."/>
            <person name="Lindeberg M."/>
            <person name="Jackson R.W."/>
            <person name="Selengut J."/>
            <person name="Dodson R."/>
            <person name="Brinkac L.M."/>
            <person name="Daugherty S.C."/>
            <person name="DeBoy R.T."/>
            <person name="Durkin A.S."/>
            <person name="Gwinn Giglio M."/>
            <person name="Madupu R."/>
            <person name="Nelson W.C."/>
            <person name="Rosovitz M.J."/>
            <person name="Sullivan S.A."/>
            <person name="Crabtree J."/>
            <person name="Creasy T."/>
            <person name="Davidsen T.M."/>
            <person name="Haft D.H."/>
            <person name="Zafar N."/>
            <person name="Zhou L."/>
            <person name="Halpin R."/>
            <person name="Holley T."/>
            <person name="Khouri H.M."/>
            <person name="Feldblyum T.V."/>
            <person name="White O."/>
            <person name="Fraser C.M."/>
            <person name="Chatterjee A.K."/>
            <person name="Cartinhour S."/>
            <person name="Schneider D."/>
            <person name="Mansfield J.W."/>
            <person name="Collmer A."/>
            <person name="Buell R."/>
        </authorList>
    </citation>
    <scope>NUCLEOTIDE SEQUENCE [LARGE SCALE GENOMIC DNA]</scope>
    <source>
        <strain>1448A / Race 6</strain>
    </source>
</reference>
<proteinExistence type="inferred from homology"/>
<dbReference type="EC" id="2.7.4.9" evidence="1"/>
<dbReference type="EMBL" id="CP000058">
    <property type="protein sequence ID" value="AAZ35194.1"/>
    <property type="molecule type" value="Genomic_DNA"/>
</dbReference>
<dbReference type="RefSeq" id="WP_004667786.1">
    <property type="nucleotide sequence ID" value="NC_005773.3"/>
</dbReference>
<dbReference type="SMR" id="Q48L36"/>
<dbReference type="GeneID" id="61869078"/>
<dbReference type="KEGG" id="psp:PSPPH_1646"/>
<dbReference type="eggNOG" id="COG0125">
    <property type="taxonomic scope" value="Bacteria"/>
</dbReference>
<dbReference type="HOGENOM" id="CLU_049131_0_2_6"/>
<dbReference type="Proteomes" id="UP000000551">
    <property type="component" value="Chromosome"/>
</dbReference>
<dbReference type="GO" id="GO:0005829">
    <property type="term" value="C:cytosol"/>
    <property type="evidence" value="ECO:0007669"/>
    <property type="project" value="TreeGrafter"/>
</dbReference>
<dbReference type="GO" id="GO:0005524">
    <property type="term" value="F:ATP binding"/>
    <property type="evidence" value="ECO:0007669"/>
    <property type="project" value="UniProtKB-UniRule"/>
</dbReference>
<dbReference type="GO" id="GO:0004798">
    <property type="term" value="F:dTMP kinase activity"/>
    <property type="evidence" value="ECO:0007669"/>
    <property type="project" value="UniProtKB-UniRule"/>
</dbReference>
<dbReference type="GO" id="GO:0006233">
    <property type="term" value="P:dTDP biosynthetic process"/>
    <property type="evidence" value="ECO:0007669"/>
    <property type="project" value="InterPro"/>
</dbReference>
<dbReference type="GO" id="GO:0006235">
    <property type="term" value="P:dTTP biosynthetic process"/>
    <property type="evidence" value="ECO:0007669"/>
    <property type="project" value="UniProtKB-UniRule"/>
</dbReference>
<dbReference type="GO" id="GO:0006227">
    <property type="term" value="P:dUDP biosynthetic process"/>
    <property type="evidence" value="ECO:0007669"/>
    <property type="project" value="TreeGrafter"/>
</dbReference>
<dbReference type="CDD" id="cd01672">
    <property type="entry name" value="TMPK"/>
    <property type="match status" value="1"/>
</dbReference>
<dbReference type="FunFam" id="3.40.50.300:FF:000321">
    <property type="entry name" value="Thymidylate kinase"/>
    <property type="match status" value="1"/>
</dbReference>
<dbReference type="Gene3D" id="3.40.50.300">
    <property type="entry name" value="P-loop containing nucleotide triphosphate hydrolases"/>
    <property type="match status" value="1"/>
</dbReference>
<dbReference type="HAMAP" id="MF_00165">
    <property type="entry name" value="Thymidylate_kinase"/>
    <property type="match status" value="1"/>
</dbReference>
<dbReference type="InterPro" id="IPR027417">
    <property type="entry name" value="P-loop_NTPase"/>
</dbReference>
<dbReference type="InterPro" id="IPR039430">
    <property type="entry name" value="Thymidylate_kin-like_dom"/>
</dbReference>
<dbReference type="InterPro" id="IPR018094">
    <property type="entry name" value="Thymidylate_kinase"/>
</dbReference>
<dbReference type="NCBIfam" id="TIGR00041">
    <property type="entry name" value="DTMP_kinase"/>
    <property type="match status" value="1"/>
</dbReference>
<dbReference type="PANTHER" id="PTHR10344">
    <property type="entry name" value="THYMIDYLATE KINASE"/>
    <property type="match status" value="1"/>
</dbReference>
<dbReference type="PANTHER" id="PTHR10344:SF4">
    <property type="entry name" value="UMP-CMP KINASE 2, MITOCHONDRIAL"/>
    <property type="match status" value="1"/>
</dbReference>
<dbReference type="Pfam" id="PF02223">
    <property type="entry name" value="Thymidylate_kin"/>
    <property type="match status" value="1"/>
</dbReference>
<dbReference type="SUPFAM" id="SSF52540">
    <property type="entry name" value="P-loop containing nucleoside triphosphate hydrolases"/>
    <property type="match status" value="1"/>
</dbReference>
<evidence type="ECO:0000255" key="1">
    <source>
        <dbReference type="HAMAP-Rule" id="MF_00165"/>
    </source>
</evidence>
<sequence length="210" mass="23017">MTGLFITLEGPEGAGKSTNREYLAAQLRAQGVQVLLTREPGGTPLAERIRELLLAPSDEAMSADTELLLVFAARAQHLAEVIRPALARGEVVLCDRFTDATYAYQGGGRGLSQQRIAVLEEFVQGDLRPDLTLVFDLPVEIGLSRAAARGRLDRFEQEGRAFFDAVRSTYLQRAKADPARYRLVDAAQPLADVQASLDTLLPQLLELRRG</sequence>
<protein>
    <recommendedName>
        <fullName evidence="1">Thymidylate kinase</fullName>
        <ecNumber evidence="1">2.7.4.9</ecNumber>
    </recommendedName>
    <alternativeName>
        <fullName evidence="1">dTMP kinase</fullName>
    </alternativeName>
</protein>
<keyword id="KW-0067">ATP-binding</keyword>
<keyword id="KW-0418">Kinase</keyword>
<keyword id="KW-0545">Nucleotide biosynthesis</keyword>
<keyword id="KW-0547">Nucleotide-binding</keyword>
<keyword id="KW-0808">Transferase</keyword>
<name>KTHY_PSE14</name>
<gene>
    <name evidence="1" type="primary">tmk</name>
    <name type="ordered locus">PSPPH_1646</name>
</gene>
<feature type="chain" id="PRO_1000023252" description="Thymidylate kinase">
    <location>
        <begin position="1"/>
        <end position="210"/>
    </location>
</feature>
<feature type="binding site" evidence="1">
    <location>
        <begin position="10"/>
        <end position="17"/>
    </location>
    <ligand>
        <name>ATP</name>
        <dbReference type="ChEBI" id="CHEBI:30616"/>
    </ligand>
</feature>
<organism>
    <name type="scientific">Pseudomonas savastanoi pv. phaseolicola (strain 1448A / Race 6)</name>
    <name type="common">Pseudomonas syringae pv. phaseolicola (strain 1448A / Race 6)</name>
    <dbReference type="NCBI Taxonomy" id="264730"/>
    <lineage>
        <taxon>Bacteria</taxon>
        <taxon>Pseudomonadati</taxon>
        <taxon>Pseudomonadota</taxon>
        <taxon>Gammaproteobacteria</taxon>
        <taxon>Pseudomonadales</taxon>
        <taxon>Pseudomonadaceae</taxon>
        <taxon>Pseudomonas</taxon>
    </lineage>
</organism>